<sequence>MTAIRYEFIKTCKQTGARLGRVHTPHGSFDTPTFMPVGTLATVKTMSPEELKAMDSGIILSNTYHLWLRPGHEIIREAGGLHKFMNWDRAILTDSGGFQVFSLSDFRRIEEEGVHFRNHLNGDKLFLSPEKAMEIQNALGSDIMMAFDECPPFPATFEYMKKSVERTSRWAERCLKAHERPQDQGLFGIVQGGEFEELRRQSAKDLVSMDFPGYAVGGLSVGEPKDIMNRVLEFTTPLLPDNKPRYLMGVGSPDSLIDGAIRGIDMFDCVLPTRIARNGTCMTSEGRLVVKNAKFARDFGPLDPNCDCYTCKNYSRAYIRHLMKCDETFGIRLTSYHNLHFLLNLMEQVRQAIREDRLGDFREEFFEQYGFNKPNAKNF</sequence>
<reference key="1">
    <citation type="journal article" date="2006" name="J. Bacteriol.">
        <title>Pathogenomic sequence analysis of Bacillus cereus and Bacillus thuringiensis isolates closely related to Bacillus anthracis.</title>
        <authorList>
            <person name="Han C.S."/>
            <person name="Xie G."/>
            <person name="Challacombe J.F."/>
            <person name="Altherr M.R."/>
            <person name="Bhotika S.S."/>
            <person name="Bruce D."/>
            <person name="Campbell C.S."/>
            <person name="Campbell M.L."/>
            <person name="Chen J."/>
            <person name="Chertkov O."/>
            <person name="Cleland C."/>
            <person name="Dimitrijevic M."/>
            <person name="Doggett N.A."/>
            <person name="Fawcett J.J."/>
            <person name="Glavina T."/>
            <person name="Goodwin L.A."/>
            <person name="Hill K.K."/>
            <person name="Hitchcock P."/>
            <person name="Jackson P.J."/>
            <person name="Keim P."/>
            <person name="Kewalramani A.R."/>
            <person name="Longmire J."/>
            <person name="Lucas S."/>
            <person name="Malfatti S."/>
            <person name="McMurry K."/>
            <person name="Meincke L.J."/>
            <person name="Misra M."/>
            <person name="Moseman B.L."/>
            <person name="Mundt M."/>
            <person name="Munk A.C."/>
            <person name="Okinaka R.T."/>
            <person name="Parson-Quintana B."/>
            <person name="Reilly L.P."/>
            <person name="Richardson P."/>
            <person name="Robinson D.L."/>
            <person name="Rubin E."/>
            <person name="Saunders E."/>
            <person name="Tapia R."/>
            <person name="Tesmer J.G."/>
            <person name="Thayer N."/>
            <person name="Thompson L.S."/>
            <person name="Tice H."/>
            <person name="Ticknor L.O."/>
            <person name="Wills P.L."/>
            <person name="Brettin T.S."/>
            <person name="Gilna P."/>
        </authorList>
    </citation>
    <scope>NUCLEOTIDE SEQUENCE [LARGE SCALE GENOMIC DNA]</scope>
    <source>
        <strain>ZK / E33L</strain>
    </source>
</reference>
<organism>
    <name type="scientific">Bacillus cereus (strain ZK / E33L)</name>
    <dbReference type="NCBI Taxonomy" id="288681"/>
    <lineage>
        <taxon>Bacteria</taxon>
        <taxon>Bacillati</taxon>
        <taxon>Bacillota</taxon>
        <taxon>Bacilli</taxon>
        <taxon>Bacillales</taxon>
        <taxon>Bacillaceae</taxon>
        <taxon>Bacillus</taxon>
        <taxon>Bacillus cereus group</taxon>
    </lineage>
</organism>
<comment type="function">
    <text evidence="1">Catalyzes the base-exchange of a guanine (G) residue with the queuine precursor 7-aminomethyl-7-deazaguanine (PreQ1) at position 34 (anticodon wobble position) in tRNAs with GU(N) anticodons (tRNA-Asp, -Asn, -His and -Tyr). Catalysis occurs through a double-displacement mechanism. The nucleophile active site attacks the C1' of nucleotide 34 to detach the guanine base from the RNA, forming a covalent enzyme-RNA intermediate. The proton acceptor active site deprotonates the incoming PreQ1, allowing a nucleophilic attack on the C1' of the ribose to form the product. After dissociation, two additional enzymatic reactions on the tRNA convert PreQ1 to queuine (Q), resulting in the hypermodified nucleoside queuosine (7-(((4,5-cis-dihydroxy-2-cyclopenten-1-yl)amino)methyl)-7-deazaguanosine).</text>
</comment>
<comment type="catalytic activity">
    <reaction evidence="1">
        <text>7-aminomethyl-7-carbaguanine + guanosine(34) in tRNA = 7-aminomethyl-7-carbaguanosine(34) in tRNA + guanine</text>
        <dbReference type="Rhea" id="RHEA:24104"/>
        <dbReference type="Rhea" id="RHEA-COMP:10341"/>
        <dbReference type="Rhea" id="RHEA-COMP:10342"/>
        <dbReference type="ChEBI" id="CHEBI:16235"/>
        <dbReference type="ChEBI" id="CHEBI:58703"/>
        <dbReference type="ChEBI" id="CHEBI:74269"/>
        <dbReference type="ChEBI" id="CHEBI:82833"/>
        <dbReference type="EC" id="2.4.2.29"/>
    </reaction>
</comment>
<comment type="cofactor">
    <cofactor evidence="1">
        <name>Zn(2+)</name>
        <dbReference type="ChEBI" id="CHEBI:29105"/>
    </cofactor>
    <text evidence="1">Binds 1 zinc ion per subunit.</text>
</comment>
<comment type="pathway">
    <text evidence="1">tRNA modification; tRNA-queuosine biosynthesis.</text>
</comment>
<comment type="subunit">
    <text evidence="1">Homodimer. Within each dimer, one monomer is responsible for RNA recognition and catalysis, while the other monomer binds to the replacement base PreQ1.</text>
</comment>
<comment type="similarity">
    <text evidence="1">Belongs to the queuine tRNA-ribosyltransferase family.</text>
</comment>
<name>TGT_BACCZ</name>
<gene>
    <name evidence="1" type="primary">tgt</name>
    <name type="ordered locus">BCE33L4161</name>
</gene>
<proteinExistence type="inferred from homology"/>
<keyword id="KW-0328">Glycosyltransferase</keyword>
<keyword id="KW-0479">Metal-binding</keyword>
<keyword id="KW-0671">Queuosine biosynthesis</keyword>
<keyword id="KW-0808">Transferase</keyword>
<keyword id="KW-0819">tRNA processing</keyword>
<keyword id="KW-0862">Zinc</keyword>
<evidence type="ECO:0000255" key="1">
    <source>
        <dbReference type="HAMAP-Rule" id="MF_00168"/>
    </source>
</evidence>
<accession>Q634C7</accession>
<feature type="chain" id="PRO_0000135447" description="Queuine tRNA-ribosyltransferase">
    <location>
        <begin position="1"/>
        <end position="379"/>
    </location>
</feature>
<feature type="region of interest" description="RNA binding" evidence="1">
    <location>
        <begin position="249"/>
        <end position="255"/>
    </location>
</feature>
<feature type="region of interest" description="RNA binding; important for wobble base 34 recognition" evidence="1">
    <location>
        <begin position="273"/>
        <end position="277"/>
    </location>
</feature>
<feature type="active site" description="Proton acceptor" evidence="1">
    <location>
        <position position="94"/>
    </location>
</feature>
<feature type="active site" description="Nucleophile" evidence="1">
    <location>
        <position position="268"/>
    </location>
</feature>
<feature type="binding site" evidence="1">
    <location>
        <begin position="94"/>
        <end position="98"/>
    </location>
    <ligand>
        <name>substrate</name>
    </ligand>
</feature>
<feature type="binding site" evidence="1">
    <location>
        <position position="148"/>
    </location>
    <ligand>
        <name>substrate</name>
    </ligand>
</feature>
<feature type="binding site" evidence="1">
    <location>
        <position position="191"/>
    </location>
    <ligand>
        <name>substrate</name>
    </ligand>
</feature>
<feature type="binding site" evidence="1">
    <location>
        <position position="218"/>
    </location>
    <ligand>
        <name>substrate</name>
    </ligand>
</feature>
<feature type="binding site" evidence="1">
    <location>
        <position position="306"/>
    </location>
    <ligand>
        <name>Zn(2+)</name>
        <dbReference type="ChEBI" id="CHEBI:29105"/>
    </ligand>
</feature>
<feature type="binding site" evidence="1">
    <location>
        <position position="308"/>
    </location>
    <ligand>
        <name>Zn(2+)</name>
        <dbReference type="ChEBI" id="CHEBI:29105"/>
    </ligand>
</feature>
<feature type="binding site" evidence="1">
    <location>
        <position position="311"/>
    </location>
    <ligand>
        <name>Zn(2+)</name>
        <dbReference type="ChEBI" id="CHEBI:29105"/>
    </ligand>
</feature>
<feature type="binding site" evidence="1">
    <location>
        <position position="337"/>
    </location>
    <ligand>
        <name>Zn(2+)</name>
        <dbReference type="ChEBI" id="CHEBI:29105"/>
    </ligand>
</feature>
<protein>
    <recommendedName>
        <fullName evidence="1">Queuine tRNA-ribosyltransferase</fullName>
        <ecNumber evidence="1">2.4.2.29</ecNumber>
    </recommendedName>
    <alternativeName>
        <fullName evidence="1">Guanine insertion enzyme</fullName>
    </alternativeName>
    <alternativeName>
        <fullName evidence="1">tRNA-guanine transglycosylase</fullName>
    </alternativeName>
</protein>
<dbReference type="EC" id="2.4.2.29" evidence="1"/>
<dbReference type="EMBL" id="CP000001">
    <property type="protein sequence ID" value="AAU16109.1"/>
    <property type="molecule type" value="Genomic_DNA"/>
</dbReference>
<dbReference type="RefSeq" id="WP_000125362.1">
    <property type="nucleotide sequence ID" value="NZ_CP009968.1"/>
</dbReference>
<dbReference type="SMR" id="Q634C7"/>
<dbReference type="GeneID" id="92798989"/>
<dbReference type="KEGG" id="bcz:BCE33L4161"/>
<dbReference type="PATRIC" id="fig|288681.22.peg.1222"/>
<dbReference type="UniPathway" id="UPA00392"/>
<dbReference type="Proteomes" id="UP000002612">
    <property type="component" value="Chromosome"/>
</dbReference>
<dbReference type="GO" id="GO:0005829">
    <property type="term" value="C:cytosol"/>
    <property type="evidence" value="ECO:0007669"/>
    <property type="project" value="TreeGrafter"/>
</dbReference>
<dbReference type="GO" id="GO:0046872">
    <property type="term" value="F:metal ion binding"/>
    <property type="evidence" value="ECO:0007669"/>
    <property type="project" value="UniProtKB-KW"/>
</dbReference>
<dbReference type="GO" id="GO:0008479">
    <property type="term" value="F:tRNA-guanosine(34) queuine transglycosylase activity"/>
    <property type="evidence" value="ECO:0007669"/>
    <property type="project" value="UniProtKB-UniRule"/>
</dbReference>
<dbReference type="GO" id="GO:0008616">
    <property type="term" value="P:queuosine biosynthetic process"/>
    <property type="evidence" value="ECO:0007669"/>
    <property type="project" value="UniProtKB-UniRule"/>
</dbReference>
<dbReference type="GO" id="GO:0002099">
    <property type="term" value="P:tRNA wobble guanine modification"/>
    <property type="evidence" value="ECO:0007669"/>
    <property type="project" value="TreeGrafter"/>
</dbReference>
<dbReference type="GO" id="GO:0101030">
    <property type="term" value="P:tRNA-guanine transglycosylation"/>
    <property type="evidence" value="ECO:0007669"/>
    <property type="project" value="InterPro"/>
</dbReference>
<dbReference type="FunFam" id="3.20.20.105:FF:000001">
    <property type="entry name" value="Queuine tRNA-ribosyltransferase"/>
    <property type="match status" value="1"/>
</dbReference>
<dbReference type="Gene3D" id="3.20.20.105">
    <property type="entry name" value="Queuine tRNA-ribosyltransferase-like"/>
    <property type="match status" value="1"/>
</dbReference>
<dbReference type="HAMAP" id="MF_00168">
    <property type="entry name" value="Q_tRNA_Tgt"/>
    <property type="match status" value="1"/>
</dbReference>
<dbReference type="InterPro" id="IPR050076">
    <property type="entry name" value="ArchSynthase1/Queuine_TRR"/>
</dbReference>
<dbReference type="InterPro" id="IPR004803">
    <property type="entry name" value="TGT"/>
</dbReference>
<dbReference type="InterPro" id="IPR036511">
    <property type="entry name" value="TGT-like_sf"/>
</dbReference>
<dbReference type="InterPro" id="IPR002616">
    <property type="entry name" value="tRNA_ribo_trans-like"/>
</dbReference>
<dbReference type="NCBIfam" id="TIGR00430">
    <property type="entry name" value="Q_tRNA_tgt"/>
    <property type="match status" value="1"/>
</dbReference>
<dbReference type="NCBIfam" id="TIGR00449">
    <property type="entry name" value="tgt_general"/>
    <property type="match status" value="1"/>
</dbReference>
<dbReference type="PANTHER" id="PTHR46499">
    <property type="entry name" value="QUEUINE TRNA-RIBOSYLTRANSFERASE"/>
    <property type="match status" value="1"/>
</dbReference>
<dbReference type="PANTHER" id="PTHR46499:SF1">
    <property type="entry name" value="QUEUINE TRNA-RIBOSYLTRANSFERASE"/>
    <property type="match status" value="1"/>
</dbReference>
<dbReference type="Pfam" id="PF01702">
    <property type="entry name" value="TGT"/>
    <property type="match status" value="1"/>
</dbReference>
<dbReference type="SUPFAM" id="SSF51713">
    <property type="entry name" value="tRNA-guanine transglycosylase"/>
    <property type="match status" value="1"/>
</dbReference>